<name>TEA4_SCHPO</name>
<organism>
    <name type="scientific">Schizosaccharomyces pombe (strain 972 / ATCC 24843)</name>
    <name type="common">Fission yeast</name>
    <dbReference type="NCBI Taxonomy" id="284812"/>
    <lineage>
        <taxon>Eukaryota</taxon>
        <taxon>Fungi</taxon>
        <taxon>Dikarya</taxon>
        <taxon>Ascomycota</taxon>
        <taxon>Taphrinomycotina</taxon>
        <taxon>Schizosaccharomycetes</taxon>
        <taxon>Schizosaccharomycetales</taxon>
        <taxon>Schizosaccharomycetaceae</taxon>
        <taxon>Schizosaccharomyces</taxon>
    </lineage>
</organism>
<comment type="function">
    <text evidence="3 4">Cell polarity factor essential for the bipolar localization and function of structures containing the cell-end marker tea1 during the normal cell cycle. Regulates cell polarity in complex with tea1 and together with the stress signaling MAPK cascade, contributes to cell polarity maintenance under stress conditions. Required for the localization of for3 at the cell tip specifically during initiation of bipolar growth. During the new end take off (NETO), formation of a protein complex that includes tea1, tea4 and for3 is necessary and sufficient for the establishment of cell polarity and localized actin assembly at new cell ends.</text>
</comment>
<comment type="subunit">
    <text evidence="3 4">An essential component of the tea1 cell-end complex. Interacts with win1, tea1 and for3. Interacts with tip1 in the presence of tea1.</text>
</comment>
<comment type="interaction">
    <interactant intactId="EBI-1099982">
        <id>O60132</id>
    </interactant>
    <interactant intactId="EBI-4320127">
        <id>P13681</id>
        <label>dis2</label>
    </interactant>
    <organismsDiffer>false</organismsDiffer>
    <experiments>2</experiments>
</comment>
<comment type="interaction">
    <interactant intactId="EBI-1099982">
        <id>O60132</id>
    </interactant>
    <interactant intactId="EBI-1102572">
        <id>O94532</id>
        <label>for3</label>
    </interactant>
    <organismsDiffer>false</organismsDiffer>
    <experiments>5</experiments>
</comment>
<comment type="interaction">
    <interactant intactId="EBI-1099982">
        <id>O60132</id>
    </interactant>
    <interactant intactId="EBI-4319163">
        <id>Q09690</id>
        <label>pom1</label>
    </interactant>
    <organismsDiffer>false</organismsDiffer>
    <experiments>5</experiments>
</comment>
<comment type="interaction">
    <interactant intactId="EBI-1099982">
        <id>O60132</id>
    </interactant>
    <interactant intactId="EBI-875376">
        <id>P87061</id>
        <label>tea1</label>
    </interactant>
    <organismsDiffer>false</organismsDiffer>
    <experiments>10</experiments>
</comment>
<comment type="interaction">
    <interactant intactId="EBI-1099982">
        <id>O60132</id>
    </interactant>
    <interactant intactId="EBI-1099995">
        <id>O74304</id>
        <label>win1</label>
    </interactant>
    <organismsDiffer>false</organismsDiffer>
    <experiments>2</experiments>
</comment>
<comment type="subcellular location">
    <subcellularLocation>
        <location evidence="3 4">Cytoplasm</location>
        <location evidence="3 4">Cytoskeleton</location>
    </subcellularLocation>
    <text>Through it's binding with tea1, is transported by the cytoplasmic microtubule system and is localized at cell tips, microtubule plus ends and cytoplasmic dots.</text>
</comment>
<proteinExistence type="evidence at protein level"/>
<reference key="1">
    <citation type="journal article" date="2002" name="Nature">
        <title>The genome sequence of Schizosaccharomyces pombe.</title>
        <authorList>
            <person name="Wood V."/>
            <person name="Gwilliam R."/>
            <person name="Rajandream M.A."/>
            <person name="Lyne M.H."/>
            <person name="Lyne R."/>
            <person name="Stewart A."/>
            <person name="Sgouros J.G."/>
            <person name="Peat N."/>
            <person name="Hayles J."/>
            <person name="Baker S.G."/>
            <person name="Basham D."/>
            <person name="Bowman S."/>
            <person name="Brooks K."/>
            <person name="Brown D."/>
            <person name="Brown S."/>
            <person name="Chillingworth T."/>
            <person name="Churcher C.M."/>
            <person name="Collins M."/>
            <person name="Connor R."/>
            <person name="Cronin A."/>
            <person name="Davis P."/>
            <person name="Feltwell T."/>
            <person name="Fraser A."/>
            <person name="Gentles S."/>
            <person name="Goble A."/>
            <person name="Hamlin N."/>
            <person name="Harris D.E."/>
            <person name="Hidalgo J."/>
            <person name="Hodgson G."/>
            <person name="Holroyd S."/>
            <person name="Hornsby T."/>
            <person name="Howarth S."/>
            <person name="Huckle E.J."/>
            <person name="Hunt S."/>
            <person name="Jagels K."/>
            <person name="James K.D."/>
            <person name="Jones L."/>
            <person name="Jones M."/>
            <person name="Leather S."/>
            <person name="McDonald S."/>
            <person name="McLean J."/>
            <person name="Mooney P."/>
            <person name="Moule S."/>
            <person name="Mungall K.L."/>
            <person name="Murphy L.D."/>
            <person name="Niblett D."/>
            <person name="Odell C."/>
            <person name="Oliver K."/>
            <person name="O'Neil S."/>
            <person name="Pearson D."/>
            <person name="Quail M.A."/>
            <person name="Rabbinowitsch E."/>
            <person name="Rutherford K.M."/>
            <person name="Rutter S."/>
            <person name="Saunders D."/>
            <person name="Seeger K."/>
            <person name="Sharp S."/>
            <person name="Skelton J."/>
            <person name="Simmonds M.N."/>
            <person name="Squares R."/>
            <person name="Squares S."/>
            <person name="Stevens K."/>
            <person name="Taylor K."/>
            <person name="Taylor R.G."/>
            <person name="Tivey A."/>
            <person name="Walsh S.V."/>
            <person name="Warren T."/>
            <person name="Whitehead S."/>
            <person name="Woodward J.R."/>
            <person name="Volckaert G."/>
            <person name="Aert R."/>
            <person name="Robben J."/>
            <person name="Grymonprez B."/>
            <person name="Weltjens I."/>
            <person name="Vanstreels E."/>
            <person name="Rieger M."/>
            <person name="Schaefer M."/>
            <person name="Mueller-Auer S."/>
            <person name="Gabel C."/>
            <person name="Fuchs M."/>
            <person name="Duesterhoeft A."/>
            <person name="Fritzc C."/>
            <person name="Holzer E."/>
            <person name="Moestl D."/>
            <person name="Hilbert H."/>
            <person name="Borzym K."/>
            <person name="Langer I."/>
            <person name="Beck A."/>
            <person name="Lehrach H."/>
            <person name="Reinhardt R."/>
            <person name="Pohl T.M."/>
            <person name="Eger P."/>
            <person name="Zimmermann W."/>
            <person name="Wedler H."/>
            <person name="Wambutt R."/>
            <person name="Purnelle B."/>
            <person name="Goffeau A."/>
            <person name="Cadieu E."/>
            <person name="Dreano S."/>
            <person name="Gloux S."/>
            <person name="Lelaure V."/>
            <person name="Mottier S."/>
            <person name="Galibert F."/>
            <person name="Aves S.J."/>
            <person name="Xiang Z."/>
            <person name="Hunt C."/>
            <person name="Moore K."/>
            <person name="Hurst S.M."/>
            <person name="Lucas M."/>
            <person name="Rochet M."/>
            <person name="Gaillardin C."/>
            <person name="Tallada V.A."/>
            <person name="Garzon A."/>
            <person name="Thode G."/>
            <person name="Daga R.R."/>
            <person name="Cruzado L."/>
            <person name="Jimenez J."/>
            <person name="Sanchez M."/>
            <person name="del Rey F."/>
            <person name="Benito J."/>
            <person name="Dominguez A."/>
            <person name="Revuelta J.L."/>
            <person name="Moreno S."/>
            <person name="Armstrong J."/>
            <person name="Forsburg S.L."/>
            <person name="Cerutti L."/>
            <person name="Lowe T."/>
            <person name="McCombie W.R."/>
            <person name="Paulsen I."/>
            <person name="Potashkin J."/>
            <person name="Shpakovski G.V."/>
            <person name="Ussery D."/>
            <person name="Barrell B.G."/>
            <person name="Nurse P."/>
        </authorList>
    </citation>
    <scope>NUCLEOTIDE SEQUENCE [LARGE SCALE GENOMIC DNA]</scope>
    <source>
        <strain>972 / ATCC 24843</strain>
    </source>
</reference>
<reference key="2">
    <citation type="journal article" date="2011" name="Science">
        <title>Comparative functional genomics of the fission yeasts.</title>
        <authorList>
            <person name="Rhind N."/>
            <person name="Chen Z."/>
            <person name="Yassour M."/>
            <person name="Thompson D.A."/>
            <person name="Haas B.J."/>
            <person name="Habib N."/>
            <person name="Wapinski I."/>
            <person name="Roy S."/>
            <person name="Lin M.F."/>
            <person name="Heiman D.I."/>
            <person name="Young S.K."/>
            <person name="Furuya K."/>
            <person name="Guo Y."/>
            <person name="Pidoux A."/>
            <person name="Chen H.M."/>
            <person name="Robbertse B."/>
            <person name="Goldberg J.M."/>
            <person name="Aoki K."/>
            <person name="Bayne E.H."/>
            <person name="Berlin A.M."/>
            <person name="Desjardins C.A."/>
            <person name="Dobbs E."/>
            <person name="Dukaj L."/>
            <person name="Fan L."/>
            <person name="FitzGerald M.G."/>
            <person name="French C."/>
            <person name="Gujja S."/>
            <person name="Hansen K."/>
            <person name="Keifenheim D."/>
            <person name="Levin J.Z."/>
            <person name="Mosher R.A."/>
            <person name="Mueller C.A."/>
            <person name="Pfiffner J."/>
            <person name="Priest M."/>
            <person name="Russ C."/>
            <person name="Smialowska A."/>
            <person name="Swoboda P."/>
            <person name="Sykes S.M."/>
            <person name="Vaughn M."/>
            <person name="Vengrova S."/>
            <person name="Yoder R."/>
            <person name="Zeng Q."/>
            <person name="Allshire R."/>
            <person name="Baulcombe D."/>
            <person name="Birren B.W."/>
            <person name="Brown W."/>
            <person name="Ekwall K."/>
            <person name="Kellis M."/>
            <person name="Leatherwood J."/>
            <person name="Levin H."/>
            <person name="Margalit H."/>
            <person name="Martienssen R."/>
            <person name="Nieduszynski C.A."/>
            <person name="Spatafora J.W."/>
            <person name="Friedman N."/>
            <person name="Dalgaard J.Z."/>
            <person name="Baumann P."/>
            <person name="Niki H."/>
            <person name="Regev A."/>
            <person name="Nusbaum C."/>
        </authorList>
    </citation>
    <scope>REVISION OF GENE MODEL</scope>
</reference>
<reference evidence="7" key="3">
    <citation type="journal article" date="2005" name="Curr. Biol.">
        <title>Wsh3/Tea4 is a novel cell-end factor essential for bipolar distribution of Tea1 and protects cell polarity under environmental stress in S. pombe.</title>
        <authorList>
            <person name="Tatebe H."/>
            <person name="Shimada K."/>
            <person name="Uzawa S."/>
            <person name="Morigasaki S."/>
            <person name="Shiozaki K."/>
        </authorList>
    </citation>
    <scope>FUNCTION</scope>
    <scope>SUBCELLULAR LOCATION</scope>
    <scope>INTERACTION WITH TEA1 AND WIN1</scope>
</reference>
<reference evidence="7" key="4">
    <citation type="journal article" date="2005" name="Dev. Cell">
        <title>Tea4p links microtubule plus ends with the formin for3p in the establishment of cell polarity.</title>
        <authorList>
            <person name="Martin S.G."/>
            <person name="McDonald W.H."/>
            <person name="Yates J.R. III"/>
            <person name="Chang F."/>
        </authorList>
    </citation>
    <scope>FUNCTION</scope>
    <scope>INTERACTION WITH FOR3; TEA1 AND TIP1</scope>
    <scope>SUBCELLULAR LOCATION</scope>
</reference>
<reference key="5">
    <citation type="journal article" date="2008" name="J. Proteome Res.">
        <title>Phosphoproteome analysis of fission yeast.</title>
        <authorList>
            <person name="Wilson-Grady J.T."/>
            <person name="Villen J."/>
            <person name="Gygi S.P."/>
        </authorList>
    </citation>
    <scope>PHOSPHORYLATION [LARGE SCALE ANALYSIS] AT TYR-35; SER-36 AND TYR-40</scope>
    <scope>IDENTIFICATION BY MASS SPECTROMETRY</scope>
</reference>
<protein>
    <recommendedName>
        <fullName>Tip elongation aberrant protein Tea4</fullName>
    </recommendedName>
    <alternativeName>
        <fullName>Cell polarity protein tea4</fullName>
    </alternativeName>
    <alternativeName>
        <fullName>Win1-interacting SH3 domain protein</fullName>
    </alternativeName>
</protein>
<evidence type="ECO:0000255" key="1">
    <source>
        <dbReference type="PROSITE-ProRule" id="PRU00192"/>
    </source>
</evidence>
<evidence type="ECO:0000256" key="2">
    <source>
        <dbReference type="SAM" id="MobiDB-lite"/>
    </source>
</evidence>
<evidence type="ECO:0000269" key="3">
    <source>
    </source>
</evidence>
<evidence type="ECO:0000269" key="4">
    <source>
    </source>
</evidence>
<evidence type="ECO:0000269" key="5">
    <source>
    </source>
</evidence>
<evidence type="ECO:0000303" key="6">
    <source>
    </source>
</evidence>
<evidence type="ECO:0000305" key="7"/>
<evidence type="ECO:0000312" key="8">
    <source>
        <dbReference type="PomBase" id="SPBC1706.01"/>
    </source>
</evidence>
<sequence length="821" mass="90794">MLHMNSASSADSMEIMESHFDPTQQNDSTIIESRYSPEEYLEQSFEIQRIISGENSEPQTVASQEISDSQEEDTTLTSSQFEDCGTEYNEVVEDDEFRSEDEDDFMDEEEEYALYEAELSSSPSIHEEVIDCNFVHAIRGFEATVEGQVDATKGDMMILLDDSNSYWWLVKMCKNLAIGYLPAEYIETPSERLARLNKYKNSETSNSQQSVTLPPLDIVEKTLEAPSPNFRIKRVTFTCSSNSSDDEMDSENDYEAMVNRTVAENGLEIEFSDSSDSSLSAEYRSESEDHVTDSPAYVDLTELEGGFNQFNSTSFQSTSPLGLEIVETEINGSSTTADSKNSHSPYSKFSSAYPDAENSNISKINISIAGNKELYGNATQSDPSLYSTWIANKHKTASSATVDSPLRRSLSVDAMQSNASFSSYSSTSNTDKSLRPSSYSAVSESSNFTHDVSRDNKEISLNAPKSIIVSQSDSFDTSNVTQDAPNDVEKEPISGQMPNNLSVQSLKQLEVYPIRHSVSIEMPSEKLLSPRLYSSSTPSSPTKGFQKDDEEDSENRKQADKVELSPSSLLRQMSLPVDSSSQSDAQCTTSSVYITAERKAFSQSSIDLSTLSNHHVNNEINRRSFAGGFTSLADELSEMRELLHESPAPLECNEEMVIPTPELDASSAIPSSSISHDEDLLPRKNTEESTSSSSFSSLITSPASLQYDENPFKQSVVAELNNNSSSVPFVDSAHASDIHAYDNDHVSTKNKEFNRRLREFILDPDSLSGLYWSVKSAGVRASRRVSRNIEGESVSSDLDDIFANVLKGLSDEMASLLNTNR</sequence>
<gene>
    <name evidence="8" type="primary">tea4</name>
    <name evidence="6" type="synonym">wsh3</name>
    <name type="ORF">SPBC1706.01</name>
</gene>
<accession>O60132</accession>
<keyword id="KW-0963">Cytoplasm</keyword>
<keyword id="KW-0206">Cytoskeleton</keyword>
<keyword id="KW-0597">Phosphoprotein</keyword>
<keyword id="KW-1185">Reference proteome</keyword>
<keyword id="KW-0728">SH3 domain</keyword>
<dbReference type="EMBL" id="CU329671">
    <property type="protein sequence ID" value="CAA19002.2"/>
    <property type="molecule type" value="Genomic_DNA"/>
</dbReference>
<dbReference type="PIR" id="T39626">
    <property type="entry name" value="T39626"/>
</dbReference>
<dbReference type="RefSeq" id="NP_595240.2">
    <property type="nucleotide sequence ID" value="NM_001021146.2"/>
</dbReference>
<dbReference type="SMR" id="O60132"/>
<dbReference type="BioGRID" id="276197">
    <property type="interactions" value="45"/>
</dbReference>
<dbReference type="FunCoup" id="O60132">
    <property type="interactions" value="7"/>
</dbReference>
<dbReference type="IntAct" id="O60132">
    <property type="interactions" value="7"/>
</dbReference>
<dbReference type="STRING" id="284812.O60132"/>
<dbReference type="iPTMnet" id="O60132"/>
<dbReference type="PaxDb" id="4896-SPBC1706.01.1"/>
<dbReference type="EnsemblFungi" id="SPBC1706.01.1">
    <property type="protein sequence ID" value="SPBC1706.01.1:pep"/>
    <property type="gene ID" value="SPBC1706.01"/>
</dbReference>
<dbReference type="GeneID" id="2539642"/>
<dbReference type="KEGG" id="spo:2539642"/>
<dbReference type="PomBase" id="SPBC1706.01">
    <property type="gene designation" value="tea4"/>
</dbReference>
<dbReference type="VEuPathDB" id="FungiDB:SPBC1706.01"/>
<dbReference type="eggNOG" id="ENOG502R17J">
    <property type="taxonomic scope" value="Eukaryota"/>
</dbReference>
<dbReference type="HOGENOM" id="CLU_376493_0_0_1"/>
<dbReference type="InParanoid" id="O60132"/>
<dbReference type="OMA" id="WWLVKIC"/>
<dbReference type="PRO" id="PR:O60132"/>
<dbReference type="Proteomes" id="UP000002485">
    <property type="component" value="Chromosome II"/>
</dbReference>
<dbReference type="GO" id="GO:0051285">
    <property type="term" value="C:cell cortex of cell tip"/>
    <property type="evidence" value="ECO:0000314"/>
    <property type="project" value="PomBase"/>
</dbReference>
<dbReference type="GO" id="GO:0032153">
    <property type="term" value="C:cell division site"/>
    <property type="evidence" value="ECO:0000314"/>
    <property type="project" value="PomBase"/>
</dbReference>
<dbReference type="GO" id="GO:0051286">
    <property type="term" value="C:cell tip"/>
    <property type="evidence" value="ECO:0000314"/>
    <property type="project" value="PomBase"/>
</dbReference>
<dbReference type="GO" id="GO:0097575">
    <property type="term" value="C:lateral cell cortex"/>
    <property type="evidence" value="ECO:0000314"/>
    <property type="project" value="PomBase"/>
</dbReference>
<dbReference type="GO" id="GO:0015630">
    <property type="term" value="C:microtubule cytoskeleton"/>
    <property type="evidence" value="ECO:0000318"/>
    <property type="project" value="GO_Central"/>
</dbReference>
<dbReference type="GO" id="GO:0035371">
    <property type="term" value="C:microtubule plus-end"/>
    <property type="evidence" value="ECO:0000314"/>
    <property type="project" value="PomBase"/>
</dbReference>
<dbReference type="GO" id="GO:0035839">
    <property type="term" value="C:non-growing cell tip"/>
    <property type="evidence" value="ECO:0000314"/>
    <property type="project" value="PomBase"/>
</dbReference>
<dbReference type="GO" id="GO:0035840">
    <property type="term" value="C:old growing cell tip"/>
    <property type="evidence" value="ECO:0000314"/>
    <property type="project" value="PomBase"/>
</dbReference>
<dbReference type="GO" id="GO:0008093">
    <property type="term" value="F:cytoskeletal anchor activity"/>
    <property type="evidence" value="ECO:0000315"/>
    <property type="project" value="PomBase"/>
</dbReference>
<dbReference type="GO" id="GO:0061171">
    <property type="term" value="P:establishment of bipolar cell polarity"/>
    <property type="evidence" value="ECO:0000315"/>
    <property type="project" value="PomBase"/>
</dbReference>
<dbReference type="GO" id="GO:0030010">
    <property type="term" value="P:establishment of cell polarity"/>
    <property type="evidence" value="ECO:0000269"/>
    <property type="project" value="PomBase"/>
</dbReference>
<dbReference type="GO" id="GO:0030950">
    <property type="term" value="P:establishment or maintenance of actin cytoskeleton polarity"/>
    <property type="evidence" value="ECO:0000315"/>
    <property type="project" value="PomBase"/>
</dbReference>
<dbReference type="GO" id="GO:0061245">
    <property type="term" value="P:establishment or maintenance of bipolar cell polarity"/>
    <property type="evidence" value="ECO:0000315"/>
    <property type="project" value="PomBase"/>
</dbReference>
<dbReference type="GO" id="GO:0097248">
    <property type="term" value="P:maintenance of protein location in cell cortex of cell tip"/>
    <property type="evidence" value="ECO:0000315"/>
    <property type="project" value="PomBase"/>
</dbReference>
<dbReference type="GO" id="GO:0008104">
    <property type="term" value="P:protein localization"/>
    <property type="evidence" value="ECO:0000318"/>
    <property type="project" value="GO_Central"/>
</dbReference>
<dbReference type="Gene3D" id="2.30.30.40">
    <property type="entry name" value="SH3 Domains"/>
    <property type="match status" value="1"/>
</dbReference>
<dbReference type="InterPro" id="IPR053039">
    <property type="entry name" value="Polarity_Bud-Selection_Reg"/>
</dbReference>
<dbReference type="InterPro" id="IPR036028">
    <property type="entry name" value="SH3-like_dom_sf"/>
</dbReference>
<dbReference type="InterPro" id="IPR001452">
    <property type="entry name" value="SH3_domain"/>
</dbReference>
<dbReference type="PANTHER" id="PTHR47775">
    <property type="entry name" value="BUD SITE SELECTION PROTEIN 14"/>
    <property type="match status" value="1"/>
</dbReference>
<dbReference type="PANTHER" id="PTHR47775:SF1">
    <property type="entry name" value="BUD SITE SELECTION PROTEIN 14"/>
    <property type="match status" value="1"/>
</dbReference>
<dbReference type="Pfam" id="PF00018">
    <property type="entry name" value="SH3_1"/>
    <property type="match status" value="1"/>
</dbReference>
<dbReference type="SMART" id="SM00326">
    <property type="entry name" value="SH3"/>
    <property type="match status" value="1"/>
</dbReference>
<dbReference type="SUPFAM" id="SSF50044">
    <property type="entry name" value="SH3-domain"/>
    <property type="match status" value="1"/>
</dbReference>
<dbReference type="PROSITE" id="PS50002">
    <property type="entry name" value="SH3"/>
    <property type="match status" value="1"/>
</dbReference>
<feature type="chain" id="PRO_0000259412" description="Tip elongation aberrant protein Tea4">
    <location>
        <begin position="1"/>
        <end position="821"/>
    </location>
</feature>
<feature type="domain" description="SH3" evidence="1">
    <location>
        <begin position="130"/>
        <end position="191"/>
    </location>
</feature>
<feature type="region of interest" description="Disordered" evidence="2">
    <location>
        <begin position="1"/>
        <end position="36"/>
    </location>
</feature>
<feature type="region of interest" description="Disordered" evidence="2">
    <location>
        <begin position="51"/>
        <end position="79"/>
    </location>
</feature>
<feature type="region of interest" description="Disordered" evidence="2">
    <location>
        <begin position="267"/>
        <end position="292"/>
    </location>
</feature>
<feature type="region of interest" description="Disordered" evidence="2">
    <location>
        <begin position="333"/>
        <end position="352"/>
    </location>
</feature>
<feature type="region of interest" description="Disordered" evidence="2">
    <location>
        <begin position="473"/>
        <end position="500"/>
    </location>
</feature>
<feature type="region of interest" description="Interaction with tea1">
    <location>
        <begin position="527"/>
        <end position="821"/>
    </location>
</feature>
<feature type="region of interest" description="Disordered" evidence="2">
    <location>
        <begin position="529"/>
        <end position="570"/>
    </location>
</feature>
<feature type="region of interest" description="Interaction with win1">
    <location>
        <begin position="599"/>
        <end position="821"/>
    </location>
</feature>
<feature type="region of interest" description="Disordered" evidence="2">
    <location>
        <begin position="664"/>
        <end position="697"/>
    </location>
</feature>
<feature type="compositionally biased region" description="Polar residues" evidence="2">
    <location>
        <begin position="1"/>
        <end position="11"/>
    </location>
</feature>
<feature type="compositionally biased region" description="Polar residues" evidence="2">
    <location>
        <begin position="21"/>
        <end position="31"/>
    </location>
</feature>
<feature type="compositionally biased region" description="Polar residues" evidence="2">
    <location>
        <begin position="53"/>
        <end position="67"/>
    </location>
</feature>
<feature type="compositionally biased region" description="Low complexity" evidence="2">
    <location>
        <begin position="268"/>
        <end position="282"/>
    </location>
</feature>
<feature type="compositionally biased region" description="Basic and acidic residues" evidence="2">
    <location>
        <begin position="283"/>
        <end position="292"/>
    </location>
</feature>
<feature type="compositionally biased region" description="Polar residues" evidence="2">
    <location>
        <begin position="333"/>
        <end position="350"/>
    </location>
</feature>
<feature type="compositionally biased region" description="Polar residues" evidence="2">
    <location>
        <begin position="473"/>
        <end position="484"/>
    </location>
</feature>
<feature type="compositionally biased region" description="Low complexity" evidence="2">
    <location>
        <begin position="529"/>
        <end position="541"/>
    </location>
</feature>
<feature type="compositionally biased region" description="Basic and acidic residues" evidence="2">
    <location>
        <begin position="554"/>
        <end position="563"/>
    </location>
</feature>
<feature type="compositionally biased region" description="Low complexity" evidence="2">
    <location>
        <begin position="665"/>
        <end position="674"/>
    </location>
</feature>
<feature type="compositionally biased region" description="Basic and acidic residues" evidence="2">
    <location>
        <begin position="675"/>
        <end position="687"/>
    </location>
</feature>
<feature type="modified residue" description="Phosphotyrosine" evidence="5">
    <location>
        <position position="35"/>
    </location>
</feature>
<feature type="modified residue" description="Phosphoserine" evidence="5">
    <location>
        <position position="36"/>
    </location>
</feature>
<feature type="modified residue" description="Phosphotyrosine" evidence="5">
    <location>
        <position position="40"/>
    </location>
</feature>